<protein>
    <recommendedName>
        <fullName evidence="4">3beta-hydroxysteroid dehydrogenase</fullName>
        <shortName evidence="4">3beta-HSDH</shortName>
        <ecNumber evidence="3">1.1.1.-</ecNumber>
    </recommendedName>
    <alternativeName>
        <fullName>3beta-hydroxycholanate 3-dehydrogenase (NADP(+))</fullName>
        <ecNumber evidence="3">1.1.1.393</ecNumber>
    </alternativeName>
    <alternativeName>
        <fullName evidence="5">NADP-dependent bile acid 3beta-dehydrogenase</fullName>
    </alternativeName>
</protein>
<keyword id="KW-0443">Lipid metabolism</keyword>
<keyword id="KW-0521">NADP</keyword>
<keyword id="KW-0560">Oxidoreductase</keyword>
<keyword id="KW-0753">Steroid metabolism</keyword>
<proteinExistence type="evidence at protein level"/>
<dbReference type="EC" id="1.1.1.-" evidence="3"/>
<dbReference type="EC" id="1.1.1.393" evidence="3"/>
<dbReference type="EMBL" id="AAYG02000006">
    <property type="protein sequence ID" value="EDN78833.1"/>
    <property type="molecule type" value="Genomic_DNA"/>
</dbReference>
<dbReference type="SMR" id="A7AZH2"/>
<dbReference type="SwissLipids" id="SLP:000001344"/>
<dbReference type="PaxDb" id="411470-RUMGNA_00694"/>
<dbReference type="KEGG" id="ag:EDN78833"/>
<dbReference type="eggNOG" id="COG1028">
    <property type="taxonomic scope" value="Bacteria"/>
</dbReference>
<dbReference type="BioCyc" id="MetaCyc:MONOMER-19698"/>
<dbReference type="BRENDA" id="1.1.1.393">
    <property type="organism ID" value="5479"/>
</dbReference>
<dbReference type="Proteomes" id="UP000004410">
    <property type="component" value="Unassembled WGS sequence"/>
</dbReference>
<dbReference type="GO" id="GO:0016616">
    <property type="term" value="F:oxidoreductase activity, acting on the CH-OH group of donors, NAD or NADP as acceptor"/>
    <property type="evidence" value="ECO:0000314"/>
    <property type="project" value="UniProt"/>
</dbReference>
<dbReference type="GO" id="GO:0008206">
    <property type="term" value="P:bile acid metabolic process"/>
    <property type="evidence" value="ECO:0000314"/>
    <property type="project" value="UniProt"/>
</dbReference>
<dbReference type="CDD" id="cd05233">
    <property type="entry name" value="SDR_c"/>
    <property type="match status" value="1"/>
</dbReference>
<dbReference type="FunFam" id="3.40.50.720:FF:000084">
    <property type="entry name" value="Short-chain dehydrogenase reductase"/>
    <property type="match status" value="1"/>
</dbReference>
<dbReference type="Gene3D" id="3.40.50.720">
    <property type="entry name" value="NAD(P)-binding Rossmann-like Domain"/>
    <property type="match status" value="1"/>
</dbReference>
<dbReference type="InterPro" id="IPR036291">
    <property type="entry name" value="NAD(P)-bd_dom_sf"/>
</dbReference>
<dbReference type="InterPro" id="IPR020904">
    <property type="entry name" value="Sc_DH/Rdtase_CS"/>
</dbReference>
<dbReference type="InterPro" id="IPR002347">
    <property type="entry name" value="SDR_fam"/>
</dbReference>
<dbReference type="PANTHER" id="PTHR24321">
    <property type="entry name" value="DEHYDROGENASES, SHORT CHAIN"/>
    <property type="match status" value="1"/>
</dbReference>
<dbReference type="PANTHER" id="PTHR24321:SF8">
    <property type="entry name" value="ESTRADIOL 17-BETA-DEHYDROGENASE 8-RELATED"/>
    <property type="match status" value="1"/>
</dbReference>
<dbReference type="Pfam" id="PF00106">
    <property type="entry name" value="adh_short"/>
    <property type="match status" value="1"/>
</dbReference>
<dbReference type="Pfam" id="PF13561">
    <property type="entry name" value="adh_short_C2"/>
    <property type="match status" value="1"/>
</dbReference>
<dbReference type="PRINTS" id="PR00081">
    <property type="entry name" value="GDHRDH"/>
</dbReference>
<dbReference type="PRINTS" id="PR00080">
    <property type="entry name" value="SDRFAMILY"/>
</dbReference>
<dbReference type="SUPFAM" id="SSF51735">
    <property type="entry name" value="NAD(P)-binding Rossmann-fold domains"/>
    <property type="match status" value="1"/>
</dbReference>
<dbReference type="PROSITE" id="PS00061">
    <property type="entry name" value="ADH_SHORT"/>
    <property type="match status" value="1"/>
</dbReference>
<feature type="chain" id="PRO_0000443429" description="3beta-hydroxysteroid dehydrogenase">
    <location>
        <begin position="1"/>
        <end position="276"/>
    </location>
</feature>
<feature type="active site" description="Proton acceptor" evidence="2">
    <location>
        <position position="162"/>
    </location>
</feature>
<feature type="binding site" evidence="1">
    <location>
        <begin position="70"/>
        <end position="71"/>
    </location>
    <ligand>
        <name>NADP(+)</name>
        <dbReference type="ChEBI" id="CHEBI:58349"/>
    </ligand>
</feature>
<feature type="binding site" evidence="1">
    <location>
        <position position="97"/>
    </location>
    <ligand>
        <name>NADP(+)</name>
        <dbReference type="ChEBI" id="CHEBI:58349"/>
    </ligand>
</feature>
<feature type="binding site" evidence="1">
    <location>
        <position position="162"/>
    </location>
    <ligand>
        <name>NADP(+)</name>
        <dbReference type="ChEBI" id="CHEBI:58349"/>
    </ligand>
</feature>
<feature type="binding site" evidence="1">
    <location>
        <position position="166"/>
    </location>
    <ligand>
        <name>NADP(+)</name>
        <dbReference type="ChEBI" id="CHEBI:58349"/>
    </ligand>
</feature>
<comment type="function">
    <text evidence="3">Involved in the modification of secondary bile acids into iso-bile acids (3beta-bile acids) via epimerization of the 3-OH group through a 3-oxo-intermediate. Catalyzes the reduction of 12-alpha-hydroxy-3-oxo-5-beta-cholan-24-oate (3-oxo-DCA) and 3-oxo-5-beta-cholan-24-oate (3-oxo-LCA) to yield isodeoxycholate (isoDCA) and isolithocholate (isoLCA), respectively. Is also able to catalyze the reduction of 3-dehydrocholate (3-oxo-CA or 7alpha,12alpha-dihydroxy-3-oxo-5beta-cholan-24-oate) and 7-alpha-hydroxy-3-oxo-5-beta-cholan-24-oate (3-oxo-CDCA), into isocholate (isoCA) and isochenodeoxycholate (isoCDCA), respectively. Accepts both NADPH and NADH as cosubstrates. The conversion of the abundant bile acid deoxycholate (DCA) into isoDCA by the gut bacterium R.gnavus favors the growth of the keystone commensal genus Bacteroides, since isoDCA is less cytotoxic than its parent compound, DCA; iso-bile acids have thus a potential role in modulating gut community composition.</text>
</comment>
<comment type="catalytic activity">
    <reaction evidence="3">
        <text>3-oxo-5beta-cholan-24-oate + NADPH + H(+) = isolithocholate + NADP(+)</text>
        <dbReference type="Rhea" id="RHEA:47520"/>
        <dbReference type="ChEBI" id="CHEBI:11867"/>
        <dbReference type="ChEBI" id="CHEBI:15378"/>
        <dbReference type="ChEBI" id="CHEBI:57783"/>
        <dbReference type="ChEBI" id="CHEBI:58349"/>
        <dbReference type="ChEBI" id="CHEBI:87728"/>
        <dbReference type="EC" id="1.1.1.393"/>
    </reaction>
    <physiologicalReaction direction="left-to-right" evidence="6">
        <dbReference type="Rhea" id="RHEA:47521"/>
    </physiologicalReaction>
</comment>
<comment type="catalytic activity">
    <reaction evidence="3">
        <text>12alpha-hydroxy-3-oxo-5beta-cholan-24-oate + NADPH + H(+) = isodeoxycholate + NADP(+)</text>
        <dbReference type="Rhea" id="RHEA:47488"/>
        <dbReference type="ChEBI" id="CHEBI:15378"/>
        <dbReference type="ChEBI" id="CHEBI:57783"/>
        <dbReference type="ChEBI" id="CHEBI:58349"/>
        <dbReference type="ChEBI" id="CHEBI:87733"/>
        <dbReference type="ChEBI" id="CHEBI:87734"/>
    </reaction>
    <physiologicalReaction direction="left-to-right" evidence="6">
        <dbReference type="Rhea" id="RHEA:47489"/>
    </physiologicalReaction>
</comment>
<comment type="catalytic activity">
    <reaction evidence="3">
        <text>12alpha-hydroxy-3-oxo-5beta-cholan-24-oate + NADH + H(+) = isodeoxycholate + NAD(+)</text>
        <dbReference type="Rhea" id="RHEA:47492"/>
        <dbReference type="ChEBI" id="CHEBI:15378"/>
        <dbReference type="ChEBI" id="CHEBI:57540"/>
        <dbReference type="ChEBI" id="CHEBI:57945"/>
        <dbReference type="ChEBI" id="CHEBI:87733"/>
        <dbReference type="ChEBI" id="CHEBI:87734"/>
    </reaction>
    <physiologicalReaction direction="left-to-right" evidence="6">
        <dbReference type="Rhea" id="RHEA:47493"/>
    </physiologicalReaction>
</comment>
<comment type="catalytic activity">
    <reaction evidence="3">
        <text>7alpha,12alpha-dihydroxy-3-oxo-5beta-cholan-24-oate + NADPH + H(+) = isocholate + NADP(+)</text>
        <dbReference type="Rhea" id="RHEA:47528"/>
        <dbReference type="ChEBI" id="CHEBI:15378"/>
        <dbReference type="ChEBI" id="CHEBI:57783"/>
        <dbReference type="ChEBI" id="CHEBI:58349"/>
        <dbReference type="ChEBI" id="CHEBI:87735"/>
        <dbReference type="ChEBI" id="CHEBI:87736"/>
    </reaction>
    <physiologicalReaction direction="left-to-right" evidence="6">
        <dbReference type="Rhea" id="RHEA:47529"/>
    </physiologicalReaction>
</comment>
<comment type="catalytic activity">
    <reaction evidence="3">
        <text>3-oxochenodeoxycholate + NADPH + H(+) = isochenodeoxycholate + NADP(+)</text>
        <dbReference type="Rhea" id="RHEA:47536"/>
        <dbReference type="ChEBI" id="CHEBI:15378"/>
        <dbReference type="ChEBI" id="CHEBI:57783"/>
        <dbReference type="ChEBI" id="CHEBI:58349"/>
        <dbReference type="ChEBI" id="CHEBI:87730"/>
        <dbReference type="ChEBI" id="CHEBI:87731"/>
    </reaction>
    <physiologicalReaction direction="left-to-right" evidence="6">
        <dbReference type="Rhea" id="RHEA:47537"/>
    </physiologicalReaction>
</comment>
<comment type="biophysicochemical properties">
    <kinetics>
        <KM evidence="3">56 uM for 12alpha-hydroxy-3-oxo-5beta-cholan-24-oate</KM>
        <text evidence="3">kcat is 9430 min(-1) with 12alpha-hydroxy-3-oxo-5beta-cholan-24-oate as substrate.</text>
    </kinetics>
</comment>
<comment type="similarity">
    <text evidence="5">Belongs to the short-chain dehydrogenases/reductases (SDR) family.</text>
</comment>
<accession>A7AZH2</accession>
<organism>
    <name type="scientific">Mediterraneibacter gnavus (strain ATCC 29149 / DSM 114966 / JCM 6515 / VPI C7-9)</name>
    <name type="common">Ruminococcus gnavus</name>
    <dbReference type="NCBI Taxonomy" id="411470"/>
    <lineage>
        <taxon>Bacteria</taxon>
        <taxon>Bacillati</taxon>
        <taxon>Bacillota</taxon>
        <taxon>Clostridia</taxon>
        <taxon>Lachnospirales</taxon>
        <taxon>Lachnospiraceae</taxon>
        <taxon>Mediterraneibacter</taxon>
    </lineage>
</organism>
<gene>
    <name evidence="7" type="ORF">RUMGNA_00694</name>
</gene>
<reference key="1">
    <citation type="submission" date="2007-04" db="EMBL/GenBank/DDBJ databases">
        <authorList>
            <person name="Fulton L."/>
            <person name="Clifton S."/>
            <person name="Fulton B."/>
            <person name="Xu J."/>
            <person name="Minx P."/>
            <person name="Pepin K.H."/>
            <person name="Johnson M."/>
            <person name="Thiruvilangam P."/>
            <person name="Bhonagiri V."/>
            <person name="Nash W.E."/>
            <person name="Mardis E.R."/>
            <person name="Wilson R.K."/>
        </authorList>
    </citation>
    <scope>NUCLEOTIDE SEQUENCE [LARGE SCALE GENOMIC DNA]</scope>
    <source>
        <strain evidence="7 8">ATCC 29149 / DSM 114966 / JCM 6515 / VPI C7-9</strain>
    </source>
</reference>
<reference key="2">
    <citation type="submission" date="2007-06" db="EMBL/GenBank/DDBJ databases">
        <title>Draft genome sequence of Ruminococcus gnavus (ATCC 29149).</title>
        <authorList>
            <person name="Sudarsanam P."/>
            <person name="Ley R."/>
            <person name="Guruge J."/>
            <person name="Turnbaugh P.J."/>
            <person name="Mahowald M."/>
            <person name="Liep D."/>
            <person name="Gordon J."/>
        </authorList>
    </citation>
    <scope>NUCLEOTIDE SEQUENCE [LARGE SCALE GENOMIC DNA]</scope>
    <source>
        <strain evidence="7 8">ATCC 29149 / DSM 114966 / JCM 6515 / VPI C7-9</strain>
    </source>
</reference>
<reference key="3">
    <citation type="journal article" date="2015" name="Nat. Chem. Biol.">
        <title>A biosynthetic pathway for a prominent class of microbiota-derived bile acids.</title>
        <authorList>
            <person name="Devlin A.S."/>
            <person name="Fischbach M.A."/>
        </authorList>
    </citation>
    <scope>FUNCTION</scope>
    <scope>CATALYTIC ACTIVITY</scope>
    <scope>BIOPHYSICOCHEMICAL PROPERTIES</scope>
    <scope>SUBSTRATE SPECIFICITY</scope>
    <source>
        <strain>ATCC 29149 / DSM 114966 / JCM 6515 / VPI C7-9</strain>
    </source>
</reference>
<name>3BHDP_MEDG7</name>
<sequence length="276" mass="29047">MNFGGFIMGRFDEKIMLVTGATSGIGRAVAIRAAKEGATVVAVGRNEERGAAVVAAMEEAGGKGEFMKCDVSNKDAVKALFAEIQEKYGKLDVAVNNAGIVGASKTVEELEDDDWFQVIDANLNSCFFCCREEVKLMQPSGGAIVNVSSVAGMRGFPSAAAYVASKHAVSGLTKAVAVDYATKGITCNAICPAGTDTPLTERSSADIKTRMAEIAAQGKDPMEWLKNSMLSGKTETLQKKNATPEEQAATILYFASDEARHITGSIVASDGGFTTY</sequence>
<evidence type="ECO:0000250" key="1">
    <source>
        <dbReference type="UniProtKB" id="Q9ZNN8"/>
    </source>
</evidence>
<evidence type="ECO:0000255" key="2">
    <source>
        <dbReference type="PROSITE-ProRule" id="PRU10001"/>
    </source>
</evidence>
<evidence type="ECO:0000269" key="3">
    <source>
    </source>
</evidence>
<evidence type="ECO:0000303" key="4">
    <source>
    </source>
</evidence>
<evidence type="ECO:0000305" key="5"/>
<evidence type="ECO:0000305" key="6">
    <source>
    </source>
</evidence>
<evidence type="ECO:0000312" key="7">
    <source>
        <dbReference type="EMBL" id="EDN78833.1"/>
    </source>
</evidence>
<evidence type="ECO:0000312" key="8">
    <source>
        <dbReference type="Proteomes" id="UP000004410"/>
    </source>
</evidence>